<accession>A8YZZ7</accession>
<keyword id="KW-0067">ATP-binding</keyword>
<keyword id="KW-0418">Kinase</keyword>
<keyword id="KW-0444">Lipid biosynthesis</keyword>
<keyword id="KW-0443">Lipid metabolism</keyword>
<keyword id="KW-0460">Magnesium</keyword>
<keyword id="KW-0479">Metal-binding</keyword>
<keyword id="KW-0547">Nucleotide-binding</keyword>
<keyword id="KW-0594">Phospholipid biosynthesis</keyword>
<keyword id="KW-1208">Phospholipid metabolism</keyword>
<keyword id="KW-0808">Transferase</keyword>
<comment type="function">
    <text evidence="1">May catalyze the ATP-dependent phosphorylation of lipids other than diacylglycerol (DAG).</text>
</comment>
<comment type="cofactor">
    <cofactor evidence="1">
        <name>Mg(2+)</name>
        <dbReference type="ChEBI" id="CHEBI:18420"/>
    </cofactor>
    <text evidence="1">Binds 1 Mg(2+) ion per subunit. This ion appears to have a structural role and is required for catalytic activity.</text>
</comment>
<comment type="similarity">
    <text evidence="3">Belongs to the diacylglycerol/lipid kinase family.</text>
</comment>
<sequence>MENKYTHGVLFYHEHSGLKNINQGIGEVTTALSSICKHLSIQLSENEGDIIKYCQEIKTKNYAKDVDILFILGGDGTVNELINGVMTHDLQLPIGILPGGTFNDFTKTLNIAPNHKQASEQMISAQVGTYDVIKINNQYALNFVGLGLIVQNAENVQDGSKDIFGKLSYIGSTVKTLLNPTQFNYQLSIDDKTYSGETTMILTANGPFIGGSRIPLTDLSPQDGELNTFIFNEQSFSILNDIFKKRDSMNWNEITQGIEHIPGKKISLTTDPAMKVDIDGEISLETPIDIEVIPNAIQLLTVNDL</sequence>
<feature type="chain" id="PRO_0000386516" description="Putative lipid kinase USA300HOU_0749">
    <location>
        <begin position="1"/>
        <end position="305"/>
    </location>
</feature>
<feature type="domain" description="DAGKc" evidence="2">
    <location>
        <begin position="3"/>
        <end position="139"/>
    </location>
</feature>
<feature type="active site" description="Proton acceptor" evidence="1">
    <location>
        <position position="281"/>
    </location>
</feature>
<feature type="binding site" evidence="2">
    <location>
        <position position="44"/>
    </location>
    <ligand>
        <name>ATP</name>
        <dbReference type="ChEBI" id="CHEBI:30616"/>
    </ligand>
</feature>
<feature type="binding site" evidence="2">
    <location>
        <begin position="74"/>
        <end position="80"/>
    </location>
    <ligand>
        <name>ATP</name>
        <dbReference type="ChEBI" id="CHEBI:30616"/>
    </ligand>
</feature>
<feature type="binding site" evidence="2">
    <location>
        <position position="101"/>
    </location>
    <ligand>
        <name>ATP</name>
        <dbReference type="ChEBI" id="CHEBI:30616"/>
    </ligand>
</feature>
<feature type="binding site" evidence="1">
    <location>
        <position position="220"/>
    </location>
    <ligand>
        <name>Mg(2+)</name>
        <dbReference type="ChEBI" id="CHEBI:18420"/>
    </ligand>
</feature>
<feature type="binding site" evidence="1">
    <location>
        <position position="223"/>
    </location>
    <ligand>
        <name>Mg(2+)</name>
        <dbReference type="ChEBI" id="CHEBI:18420"/>
    </ligand>
</feature>
<feature type="binding site" evidence="1">
    <location>
        <position position="225"/>
    </location>
    <ligand>
        <name>Mg(2+)</name>
        <dbReference type="ChEBI" id="CHEBI:18420"/>
    </ligand>
</feature>
<name>Y749_STAAT</name>
<gene>
    <name type="ordered locus">USA300HOU_0749</name>
</gene>
<reference key="1">
    <citation type="journal article" date="2007" name="BMC Microbiol.">
        <title>Subtle genetic changes enhance virulence of methicillin resistant and sensitive Staphylococcus aureus.</title>
        <authorList>
            <person name="Highlander S.K."/>
            <person name="Hulten K.G."/>
            <person name="Qin X."/>
            <person name="Jiang H."/>
            <person name="Yerrapragada S."/>
            <person name="Mason E.O. Jr."/>
            <person name="Shang Y."/>
            <person name="Williams T.M."/>
            <person name="Fortunov R.M."/>
            <person name="Liu Y."/>
            <person name="Igboeli O."/>
            <person name="Petrosino J."/>
            <person name="Tirumalai M."/>
            <person name="Uzman A."/>
            <person name="Fox G.E."/>
            <person name="Cardenas A.M."/>
            <person name="Muzny D.M."/>
            <person name="Hemphill L."/>
            <person name="Ding Y."/>
            <person name="Dugan S."/>
            <person name="Blyth P.R."/>
            <person name="Buhay C.J."/>
            <person name="Dinh H.H."/>
            <person name="Hawes A.C."/>
            <person name="Holder M."/>
            <person name="Kovar C.L."/>
            <person name="Lee S.L."/>
            <person name="Liu W."/>
            <person name="Nazareth L.V."/>
            <person name="Wang Q."/>
            <person name="Zhou J."/>
            <person name="Kaplan S.L."/>
            <person name="Weinstock G.M."/>
        </authorList>
    </citation>
    <scope>NUCLEOTIDE SEQUENCE [LARGE SCALE GENOMIC DNA]</scope>
    <source>
        <strain>USA300 / TCH1516</strain>
    </source>
</reference>
<organism>
    <name type="scientific">Staphylococcus aureus (strain USA300 / TCH1516)</name>
    <dbReference type="NCBI Taxonomy" id="451516"/>
    <lineage>
        <taxon>Bacteria</taxon>
        <taxon>Bacillati</taxon>
        <taxon>Bacillota</taxon>
        <taxon>Bacilli</taxon>
        <taxon>Bacillales</taxon>
        <taxon>Staphylococcaceae</taxon>
        <taxon>Staphylococcus</taxon>
    </lineage>
</organism>
<proteinExistence type="inferred from homology"/>
<evidence type="ECO:0000250" key="1"/>
<evidence type="ECO:0000255" key="2">
    <source>
        <dbReference type="PROSITE-ProRule" id="PRU00783"/>
    </source>
</evidence>
<evidence type="ECO:0000305" key="3"/>
<dbReference type="EC" id="2.7.1.-"/>
<dbReference type="EMBL" id="CP000730">
    <property type="protein sequence ID" value="ABX28770.1"/>
    <property type="molecule type" value="Genomic_DNA"/>
</dbReference>
<dbReference type="RefSeq" id="WP_000429014.1">
    <property type="nucleotide sequence ID" value="NC_010079.1"/>
</dbReference>
<dbReference type="SMR" id="A8YZZ7"/>
<dbReference type="KEGG" id="sax:USA300HOU_0749"/>
<dbReference type="HOGENOM" id="CLU_045532_1_0_9"/>
<dbReference type="BioCyc" id="SAUR451516-HMP:GTV5-766-MONOMER"/>
<dbReference type="GO" id="GO:0005886">
    <property type="term" value="C:plasma membrane"/>
    <property type="evidence" value="ECO:0007669"/>
    <property type="project" value="TreeGrafter"/>
</dbReference>
<dbReference type="GO" id="GO:0005524">
    <property type="term" value="F:ATP binding"/>
    <property type="evidence" value="ECO:0007669"/>
    <property type="project" value="UniProtKB-KW"/>
</dbReference>
<dbReference type="GO" id="GO:0004143">
    <property type="term" value="F:ATP-dependent diacylglycerol kinase activity"/>
    <property type="evidence" value="ECO:0007669"/>
    <property type="project" value="TreeGrafter"/>
</dbReference>
<dbReference type="GO" id="GO:0046872">
    <property type="term" value="F:metal ion binding"/>
    <property type="evidence" value="ECO:0007669"/>
    <property type="project" value="UniProtKB-KW"/>
</dbReference>
<dbReference type="GO" id="GO:0008654">
    <property type="term" value="P:phospholipid biosynthetic process"/>
    <property type="evidence" value="ECO:0007669"/>
    <property type="project" value="UniProtKB-KW"/>
</dbReference>
<dbReference type="Gene3D" id="2.60.200.40">
    <property type="match status" value="1"/>
</dbReference>
<dbReference type="Gene3D" id="3.40.50.10330">
    <property type="entry name" value="Probable inorganic polyphosphate/atp-NAD kinase, domain 1"/>
    <property type="match status" value="1"/>
</dbReference>
<dbReference type="InterPro" id="IPR017438">
    <property type="entry name" value="ATP-NAD_kinase_N"/>
</dbReference>
<dbReference type="InterPro" id="IPR005218">
    <property type="entry name" value="Diacylglycerol/lipid_kinase"/>
</dbReference>
<dbReference type="InterPro" id="IPR001206">
    <property type="entry name" value="Diacylglycerol_kinase_cat_dom"/>
</dbReference>
<dbReference type="InterPro" id="IPR050187">
    <property type="entry name" value="Lipid_Phosphate_FormReg"/>
</dbReference>
<dbReference type="InterPro" id="IPR016064">
    <property type="entry name" value="NAD/diacylglycerol_kinase_sf"/>
</dbReference>
<dbReference type="InterPro" id="IPR045540">
    <property type="entry name" value="YegS/DAGK_C"/>
</dbReference>
<dbReference type="NCBIfam" id="TIGR00147">
    <property type="entry name" value="YegS/Rv2252/BmrU family lipid kinase"/>
    <property type="match status" value="1"/>
</dbReference>
<dbReference type="PANTHER" id="PTHR12358:SF106">
    <property type="entry name" value="LIPID KINASE YEGS"/>
    <property type="match status" value="1"/>
</dbReference>
<dbReference type="PANTHER" id="PTHR12358">
    <property type="entry name" value="SPHINGOSINE KINASE"/>
    <property type="match status" value="1"/>
</dbReference>
<dbReference type="Pfam" id="PF00781">
    <property type="entry name" value="DAGK_cat"/>
    <property type="match status" value="1"/>
</dbReference>
<dbReference type="Pfam" id="PF19279">
    <property type="entry name" value="YegS_C"/>
    <property type="match status" value="1"/>
</dbReference>
<dbReference type="SMART" id="SM00046">
    <property type="entry name" value="DAGKc"/>
    <property type="match status" value="1"/>
</dbReference>
<dbReference type="SUPFAM" id="SSF111331">
    <property type="entry name" value="NAD kinase/diacylglycerol kinase-like"/>
    <property type="match status" value="1"/>
</dbReference>
<dbReference type="PROSITE" id="PS50146">
    <property type="entry name" value="DAGK"/>
    <property type="match status" value="1"/>
</dbReference>
<protein>
    <recommendedName>
        <fullName>Putative lipid kinase USA300HOU_0749</fullName>
        <ecNumber>2.7.1.-</ecNumber>
    </recommendedName>
</protein>